<sequence>MATRVQPSVKVLGASFSQEANPFTAAVELTPMPMLITNPRLPDNPIIFANEAFQNLTGYEADEIIGKNCRFLQGPGTDPKHVEIIHSALEAEQSVEIDILNYKKSGEPFWNRLHISPVKTENGELHHFVSSQLDVTLELGKLVELEKERETLSIEKQRSSDQLQYIVEVANVGFWTRDYTTGEISCSAEYRRIFGLTPDEPVNYDKIIDMVVLEDRITLIQRSQESFATGKSFRVEYRITNRLGQVRWVETRAKALLGKSPALLGIVIDVTERKKAEADKALVTREISHRFKNSMAMVQSIANQTLRNATDPQTANELFSERLRALSQAHDMLLREDWTGTTISQICETALAPFNSTFGHRIRTSGPELVVSDRVTVSLSLGLYELATNAVKYGALSNENGTVQFSWDVLERQGERKFHMRWVEDGGPAVERPTRRGFGQRLLYSVLTGELRAKCDINFAPDGLVIDVLAPMTADVFPQLDSLSDTQAEPV</sequence>
<organism>
    <name type="scientific">Brucella anthropi (strain ATCC 49188 / DSM 6882 / CCUG 24695 / JCM 21032 / LMG 3331 / NBRC 15819 / NCTC 12168 / Alc 37)</name>
    <name type="common">Ochrobactrum anthropi</name>
    <dbReference type="NCBI Taxonomy" id="439375"/>
    <lineage>
        <taxon>Bacteria</taxon>
        <taxon>Pseudomonadati</taxon>
        <taxon>Pseudomonadota</taxon>
        <taxon>Alphaproteobacteria</taxon>
        <taxon>Hyphomicrobiales</taxon>
        <taxon>Brucellaceae</taxon>
        <taxon>Brucella/Ochrobactrum group</taxon>
        <taxon>Brucella</taxon>
    </lineage>
</organism>
<name>LOVHK_BRUA4</name>
<accession>A6X554</accession>
<feature type="chain" id="PRO_0000361291" description="Blue-light-activated histidine kinase">
    <location>
        <begin position="1"/>
        <end position="491"/>
    </location>
</feature>
<feature type="domain" description="PAS 1" evidence="2">
    <location>
        <begin position="19"/>
        <end position="92"/>
    </location>
</feature>
<feature type="domain" description="PAC" evidence="3">
    <location>
        <begin position="93"/>
        <end position="147"/>
    </location>
</feature>
<feature type="domain" description="PAS 2" evidence="2">
    <location>
        <begin position="159"/>
        <end position="230"/>
    </location>
</feature>
<feature type="region of interest" description="HWE histidine kinase domain">
    <location>
        <begin position="286"/>
        <end position="368"/>
    </location>
</feature>
<feature type="modified residue" description="S-4a-FMN cysteine" evidence="1">
    <location>
        <position position="69"/>
    </location>
</feature>
<feature type="modified residue" description="Phosphohistidine; by autocatalysis" evidence="1">
    <location>
        <position position="289"/>
    </location>
</feature>
<dbReference type="EC" id="2.7.13.3"/>
<dbReference type="EMBL" id="CP000759">
    <property type="protein sequence ID" value="ABS16358.1"/>
    <property type="molecule type" value="Genomic_DNA"/>
</dbReference>
<dbReference type="SMR" id="A6X554"/>
<dbReference type="STRING" id="439375.Oant_3652"/>
<dbReference type="KEGG" id="oan:Oant_3652"/>
<dbReference type="PATRIC" id="fig|439375.7.peg.3814"/>
<dbReference type="eggNOG" id="COG2202">
    <property type="taxonomic scope" value="Bacteria"/>
</dbReference>
<dbReference type="eggNOG" id="COG3920">
    <property type="taxonomic scope" value="Bacteria"/>
</dbReference>
<dbReference type="HOGENOM" id="CLU_000445_114_57_5"/>
<dbReference type="Proteomes" id="UP000002301">
    <property type="component" value="Chromosome 2"/>
</dbReference>
<dbReference type="GO" id="GO:0005524">
    <property type="term" value="F:ATP binding"/>
    <property type="evidence" value="ECO:0007669"/>
    <property type="project" value="UniProtKB-KW"/>
</dbReference>
<dbReference type="GO" id="GO:0009881">
    <property type="term" value="F:photoreceptor activity"/>
    <property type="evidence" value="ECO:0007669"/>
    <property type="project" value="UniProtKB-KW"/>
</dbReference>
<dbReference type="GO" id="GO:0004673">
    <property type="term" value="F:protein histidine kinase activity"/>
    <property type="evidence" value="ECO:0007669"/>
    <property type="project" value="UniProtKB-EC"/>
</dbReference>
<dbReference type="CDD" id="cd00130">
    <property type="entry name" value="PAS"/>
    <property type="match status" value="2"/>
</dbReference>
<dbReference type="Gene3D" id="2.10.70.100">
    <property type="match status" value="1"/>
</dbReference>
<dbReference type="Gene3D" id="3.30.565.10">
    <property type="entry name" value="Histidine kinase-like ATPase, C-terminal domain"/>
    <property type="match status" value="1"/>
</dbReference>
<dbReference type="Gene3D" id="3.30.450.20">
    <property type="entry name" value="PAS domain"/>
    <property type="match status" value="2"/>
</dbReference>
<dbReference type="InterPro" id="IPR036890">
    <property type="entry name" value="HATPase_C_sf"/>
</dbReference>
<dbReference type="InterPro" id="IPR001610">
    <property type="entry name" value="PAC"/>
</dbReference>
<dbReference type="InterPro" id="IPR000014">
    <property type="entry name" value="PAS"/>
</dbReference>
<dbReference type="InterPro" id="IPR000700">
    <property type="entry name" value="PAS-assoc_C"/>
</dbReference>
<dbReference type="InterPro" id="IPR035965">
    <property type="entry name" value="PAS-like_dom_sf"/>
</dbReference>
<dbReference type="InterPro" id="IPR013655">
    <property type="entry name" value="PAS_fold_3"/>
</dbReference>
<dbReference type="InterPro" id="IPR011102">
    <property type="entry name" value="Sig_transdc_His_kinase_HWE"/>
</dbReference>
<dbReference type="NCBIfam" id="TIGR00229">
    <property type="entry name" value="sensory_box"/>
    <property type="match status" value="2"/>
</dbReference>
<dbReference type="PANTHER" id="PTHR41523:SF7">
    <property type="entry name" value="HISTIDINE KINASE"/>
    <property type="match status" value="1"/>
</dbReference>
<dbReference type="PANTHER" id="PTHR41523">
    <property type="entry name" value="TWO-COMPONENT SYSTEM SENSOR PROTEIN"/>
    <property type="match status" value="1"/>
</dbReference>
<dbReference type="Pfam" id="PF07536">
    <property type="entry name" value="HWE_HK"/>
    <property type="match status" value="1"/>
</dbReference>
<dbReference type="Pfam" id="PF08447">
    <property type="entry name" value="PAS_3"/>
    <property type="match status" value="1"/>
</dbReference>
<dbReference type="Pfam" id="PF13426">
    <property type="entry name" value="PAS_9"/>
    <property type="match status" value="1"/>
</dbReference>
<dbReference type="SMART" id="SM00911">
    <property type="entry name" value="HWE_HK"/>
    <property type="match status" value="1"/>
</dbReference>
<dbReference type="SMART" id="SM00086">
    <property type="entry name" value="PAC"/>
    <property type="match status" value="2"/>
</dbReference>
<dbReference type="SMART" id="SM00091">
    <property type="entry name" value="PAS"/>
    <property type="match status" value="2"/>
</dbReference>
<dbReference type="SUPFAM" id="SSF55785">
    <property type="entry name" value="PYP-like sensor domain (PAS domain)"/>
    <property type="match status" value="2"/>
</dbReference>
<dbReference type="PROSITE" id="PS50113">
    <property type="entry name" value="PAC"/>
    <property type="match status" value="1"/>
</dbReference>
<dbReference type="PROSITE" id="PS50112">
    <property type="entry name" value="PAS"/>
    <property type="match status" value="2"/>
</dbReference>
<proteinExistence type="inferred from homology"/>
<keyword id="KW-0067">ATP-binding</keyword>
<keyword id="KW-0157">Chromophore</keyword>
<keyword id="KW-0285">Flavoprotein</keyword>
<keyword id="KW-0288">FMN</keyword>
<keyword id="KW-0418">Kinase</keyword>
<keyword id="KW-0547">Nucleotide-binding</keyword>
<keyword id="KW-0597">Phosphoprotein</keyword>
<keyword id="KW-0600">Photoreceptor protein</keyword>
<keyword id="KW-0675">Receptor</keyword>
<keyword id="KW-1185">Reference proteome</keyword>
<keyword id="KW-0677">Repeat</keyword>
<keyword id="KW-0716">Sensory transduction</keyword>
<keyword id="KW-0808">Transferase</keyword>
<keyword id="KW-0843">Virulence</keyword>
<gene>
    <name type="ordered locus">Oant_3652</name>
</gene>
<protein>
    <recommendedName>
        <fullName>Blue-light-activated histidine kinase</fullName>
        <ecNumber>2.7.13.3</ecNumber>
    </recommendedName>
</protein>
<reference key="1">
    <citation type="journal article" date="2011" name="J. Bacteriol.">
        <title>Genome of Ochrobactrum anthropi ATCC 49188 T, a versatile opportunistic pathogen and symbiont of several eukaryotic hosts.</title>
        <authorList>
            <person name="Chain P.S."/>
            <person name="Lang D.M."/>
            <person name="Comerci D.J."/>
            <person name="Malfatti S.A."/>
            <person name="Vergez L.M."/>
            <person name="Shin M."/>
            <person name="Ugalde R.A."/>
            <person name="Garcia E."/>
            <person name="Tolmasky M.E."/>
        </authorList>
    </citation>
    <scope>NUCLEOTIDE SEQUENCE [LARGE SCALE GENOMIC DNA]</scope>
    <source>
        <strain>ATCC 49188 / DSM 6882 / CCUG 24695 / JCM 21032 / LMG 3331 / NBRC 15819 / NCTC 12168 / Alc 37</strain>
    </source>
</reference>
<evidence type="ECO:0000250" key="1"/>
<evidence type="ECO:0000255" key="2">
    <source>
        <dbReference type="PROSITE-ProRule" id="PRU00140"/>
    </source>
</evidence>
<evidence type="ECO:0000255" key="3">
    <source>
        <dbReference type="PROSITE-ProRule" id="PRU00141"/>
    </source>
</evidence>
<comment type="function">
    <text evidence="1">Photosensitive kinase that is involved in increased bacterial virulence upon exposure to light.</text>
</comment>
<comment type="catalytic activity">
    <reaction>
        <text>ATP + protein L-histidine = ADP + protein N-phospho-L-histidine.</text>
        <dbReference type="EC" id="2.7.13.3"/>
    </reaction>
</comment>
<comment type="PTM">
    <text evidence="1">FMN binds covalently to cysteine after exposure to blue light and this bond is spontaneously broken in the dark.</text>
</comment>